<gene>
    <name evidence="8" type="primary">lpmo1</name>
    <name evidence="8" type="synonym">LPMO9A</name>
</gene>
<organism>
    <name type="scientific">Talaromyces verruculosus</name>
    <name type="common">Penicillium verruculosum</name>
    <dbReference type="NCBI Taxonomy" id="198730"/>
    <lineage>
        <taxon>Eukaryota</taxon>
        <taxon>Fungi</taxon>
        <taxon>Dikarya</taxon>
        <taxon>Ascomycota</taxon>
        <taxon>Pezizomycotina</taxon>
        <taxon>Eurotiomycetes</taxon>
        <taxon>Eurotiomycetidae</taxon>
        <taxon>Eurotiales</taxon>
        <taxon>Trichocomaceae</taxon>
        <taxon>Talaromyces</taxon>
        <taxon>Talaromyces sect. Talaromyces</taxon>
    </lineage>
</organism>
<name>LP9A_TALVE</name>
<sequence length="328" mass="33652">MPSTKVAALSAVLALASTVAGHGYVQNIVIDGESYSGYIVTQFPYESNPPAVIGWATTATDLGYVDPTEYTNADIICHKNATPGALSAPVAAGGTVELQWTTWPDSHHGPVISYLANCNGNCSTVDKTKLDFVKIDASGLIDDTTVPGTWASDQLIAANNSWTVTIPETIAPGNYVLRHEIIALHSAENTDGAQNYPQCINLEITGSGTASPTGTPGEELYTPTDPGILVNIYQSLSTYVIPGPTLWSGAANNAVASATAAASATATPTTLVTSVASATDSPSTVAPASSTTATSVLTSVVPSVTSFVPVVTVTDVVTVTTVITTTVF</sequence>
<proteinExistence type="evidence at protein level"/>
<evidence type="ECO:0000250" key="1">
    <source>
        <dbReference type="UniProtKB" id="G3XAP7"/>
    </source>
</evidence>
<evidence type="ECO:0000250" key="2">
    <source>
        <dbReference type="UniProtKB" id="Q1K8B6"/>
    </source>
</evidence>
<evidence type="ECO:0000250" key="3">
    <source>
        <dbReference type="UniProtKB" id="Q4WP32"/>
    </source>
</evidence>
<evidence type="ECO:0000255" key="4">
    <source>
        <dbReference type="PROSITE-ProRule" id="PRU00498"/>
    </source>
</evidence>
<evidence type="ECO:0000269" key="5">
    <source>
    </source>
</evidence>
<evidence type="ECO:0000269" key="6">
    <source>
    </source>
</evidence>
<evidence type="ECO:0000269" key="7">
    <source ref="3"/>
</evidence>
<evidence type="ECO:0000303" key="8">
    <source>
    </source>
</evidence>
<evidence type="ECO:0000305" key="9"/>
<evidence type="ECO:0007744" key="10">
    <source>
        <dbReference type="PDB" id="7A8V"/>
    </source>
</evidence>
<evidence type="ECO:0007829" key="11">
    <source>
        <dbReference type="PDB" id="7A8V"/>
    </source>
</evidence>
<comment type="function">
    <text evidence="3 5 6">Lytic polysaccharide monooxygenase (LPMO) that depolymerizes crystalline and amorphous polysaccharides via the oxidation of scissile alpha- or beta-(1-4)-glycosidic bonds, yielding C1 and C4 oxidation products (PubMed:30847851, PubMed:31672609). Catalysis by LPMOs requires the reduction of the active-site copper from Cu(II) to Cu(I) by a reducing agent and H(2)O(2) or O(2) as a cosubstrate (By similarity). Shows activity on cellulosic substrates (Avicel, carboxymethylcellulose) and xylan (PubMed:30847851).</text>
</comment>
<comment type="catalytic activity">
    <reaction evidence="5 7">
        <text>[(1-&gt;4)-beta-D-glucosyl]n+m + reduced acceptor + O2 = 4-dehydro-beta-D-glucosyl-[(1-&gt;4)-beta-D-glucosyl]n-1 + [(1-&gt;4)-beta-D-glucosyl]m + acceptor + H2O.</text>
        <dbReference type="EC" id="1.14.99.56"/>
    </reaction>
</comment>
<comment type="cofactor">
    <cofactor evidence="7">
        <name>Cu(2+)</name>
        <dbReference type="ChEBI" id="CHEBI:29036"/>
    </cofactor>
    <text evidence="7">Binds 1 copper ion per subunit.</text>
</comment>
<comment type="biophysicochemical properties">
    <phDependence>
        <text evidence="6">Optimum pH is 7.5.</text>
    </phDependence>
</comment>
<comment type="subcellular location">
    <subcellularLocation>
        <location evidence="5">Secreted</location>
    </subcellularLocation>
</comment>
<comment type="domain">
    <text evidence="6">The extra C-terminal domain (residues 249 to 328) participates in protein stabilization and protects the enzyme from thermal unfolding.</text>
</comment>
<comment type="PTM">
    <text evidence="1">The catalytically essential N-terminal histidine His-22 is post-translationally modified by methylation to prevent protonation of the histidine side chain, and protect the critical active site of the enzyme from oxidative damage.</text>
</comment>
<comment type="biotechnology">
    <text evidence="5 6">Lignocellulose is the most abundant polymeric composite on Earth and is a recalcitrant but promising renewable substrate for industrial biotechnology applications. Together with cellobiose dehydrogenases (CDHs) an enzymatic system capable of oxidative cellulose cleavage is formed, which increases the efficiency of cellulases and put LPMOs at focus of biofuel research.</text>
</comment>
<comment type="similarity">
    <text evidence="9">Belongs to the polysaccharide monooxygenase AA9 family.</text>
</comment>
<reference key="1">
    <citation type="journal article" date="2019" name="Mol. Biol. Rep.">
        <title>Enhancement of the enzymatic cellulose saccharification by Penicillium verruculosum multienzyme cocktails containing homologously overexpressed lytic polysaccharide monooxygenase.</title>
        <authorList>
            <person name="Semenova M.V."/>
            <person name="Gusakov A.V."/>
            <person name="Volkov P.V."/>
            <person name="Matys V.Y."/>
            <person name="Nemashkalov V.A."/>
            <person name="Telitsin V.D."/>
            <person name="Rozhkova A.M."/>
            <person name="Sinitsyn A.P."/>
        </authorList>
    </citation>
    <scope>NUCLEOTIDE SEQUENCE [GENOMIC DNA]</scope>
    <scope>FUNCTION</scope>
    <scope>CATALYTIC ACTIVITY</scope>
    <scope>SUBCELLULAR LOCATION</scope>
    <scope>BIOTECHNOLOGY</scope>
    <scope>METHYLATION AT HIS-22</scope>
    <source>
        <strain>PV2007</strain>
        <tissue>Mycelium</tissue>
    </source>
</reference>
<reference key="2">
    <citation type="journal article" date="2020" name="Biochim. Biophys. Acta">
        <title>Purification and characterization of two forms of the homologously expressed lytic polysaccharide monooxygenase (PvLPMO9A) from Penicillium verruculosum.</title>
        <authorList>
            <person name="Semenova M.V."/>
            <person name="Gusakov A.V."/>
            <person name="Telitsin V.D."/>
            <person name="Rozhkova A.M."/>
            <person name="Kondratyeva E.G."/>
            <person name="Sinitsyn A.P."/>
        </authorList>
    </citation>
    <scope>PROTEIN SEQUENCE OF 22-79 AND 128-178</scope>
    <scope>FUNCTION</scope>
    <scope>CATALYTIC ACTIVITY</scope>
    <scope>BIOPHYSICOCHEMICAL PROPERTIES</scope>
    <scope>BIOTECHNOLOGY</scope>
    <scope>DOMAIN</scope>
    <scope>METHYLATION AT HIS-22</scope>
    <scope>GLYCOSYLATION AT ASN-159</scope>
</reference>
<reference evidence="10" key="3">
    <citation type="submission" date="2020-08" db="PDB data bank">
        <title>Crystal structure of Polysaccharide monooxygenase from P.verruculosum.</title>
        <authorList>
            <person name="Nemashkalov V."/>
            <person name="Kravchenko O."/>
            <person name="Gabdulkhakov A."/>
            <person name="Tischenko S."/>
            <person name="Rozhkova A."/>
            <person name="Sinitsyn A."/>
        </authorList>
    </citation>
    <scope>X-RAY CRYSTALLOGRAPHY (1.95 ANGSTROMS) OF 22-251 IN COMPLEX WITH COPPER</scope>
    <scope>DISULFIDE BONDS</scope>
    <scope>GLYCOSYLATION AT ASN-80; ASN-121; ASN-159; SER-235; SER-237; THR-238 AND THR-245</scope>
</reference>
<protein>
    <recommendedName>
        <fullName evidence="8">AA9 family lytic polysaccharide monooxygenase A</fullName>
        <shortName evidence="8">LPMO9A</shortName>
        <ecNumber evidence="5">1.14.99.56</ecNumber>
    </recommendedName>
    <alternativeName>
        <fullName evidence="8">AA9 family lytic polysaccharide monooxygenase 1</fullName>
        <shortName evidence="8">LPMO1</shortName>
    </alternativeName>
    <alternativeName>
        <fullName evidence="9">Cellulase LPMO9A</fullName>
    </alternativeName>
    <alternativeName>
        <fullName evidence="9">Endo-beta-1,4-glucanase LPMO9A</fullName>
        <shortName evidence="9">Endoglucanase LPMO9A</shortName>
    </alternativeName>
    <alternativeName>
        <fullName evidence="9">Glycosyl hydrolase 61 family protein LPMO9A</fullName>
    </alternativeName>
</protein>
<accession>A0A482A9N4</accession>
<dbReference type="EC" id="1.14.99.56" evidence="5"/>
<dbReference type="EMBL" id="MK158950">
    <property type="protein sequence ID" value="QBL14594.1"/>
    <property type="molecule type" value="Genomic_DNA"/>
</dbReference>
<dbReference type="PDB" id="7A8V">
    <property type="method" value="X-ray"/>
    <property type="resolution" value="1.95 A"/>
    <property type="chains" value="A=22-251"/>
</dbReference>
<dbReference type="PDBsum" id="7A8V"/>
<dbReference type="SMR" id="A0A482A9N4"/>
<dbReference type="GO" id="GO:0005576">
    <property type="term" value="C:extracellular region"/>
    <property type="evidence" value="ECO:0007669"/>
    <property type="project" value="UniProtKB-SubCell"/>
</dbReference>
<dbReference type="GO" id="GO:0004497">
    <property type="term" value="F:monooxygenase activity"/>
    <property type="evidence" value="ECO:0007669"/>
    <property type="project" value="UniProtKB-KW"/>
</dbReference>
<dbReference type="GO" id="GO:0030245">
    <property type="term" value="P:cellulose catabolic process"/>
    <property type="evidence" value="ECO:0007669"/>
    <property type="project" value="UniProtKB-KW"/>
</dbReference>
<dbReference type="CDD" id="cd21175">
    <property type="entry name" value="LPMO_AA9"/>
    <property type="match status" value="1"/>
</dbReference>
<dbReference type="Gene3D" id="2.70.50.70">
    <property type="match status" value="1"/>
</dbReference>
<dbReference type="InterPro" id="IPR049892">
    <property type="entry name" value="AA9"/>
</dbReference>
<dbReference type="InterPro" id="IPR005103">
    <property type="entry name" value="AA9_LPMO"/>
</dbReference>
<dbReference type="PANTHER" id="PTHR33353:SF34">
    <property type="entry name" value="ENDO-BETA-1,4-GLUCANASE D"/>
    <property type="match status" value="1"/>
</dbReference>
<dbReference type="PANTHER" id="PTHR33353">
    <property type="entry name" value="PUTATIVE (AFU_ORTHOLOGUE AFUA_1G12560)-RELATED"/>
    <property type="match status" value="1"/>
</dbReference>
<dbReference type="Pfam" id="PF03443">
    <property type="entry name" value="AA9"/>
    <property type="match status" value="1"/>
</dbReference>
<keyword id="KW-0002">3D-structure</keyword>
<keyword id="KW-0119">Carbohydrate metabolism</keyword>
<keyword id="KW-0136">Cellulose degradation</keyword>
<keyword id="KW-0903">Direct protein sequencing</keyword>
<keyword id="KW-1015">Disulfide bond</keyword>
<keyword id="KW-0325">Glycoprotein</keyword>
<keyword id="KW-0488">Methylation</keyword>
<keyword id="KW-0503">Monooxygenase</keyword>
<keyword id="KW-0560">Oxidoreductase</keyword>
<keyword id="KW-0624">Polysaccharide degradation</keyword>
<keyword id="KW-0964">Secreted</keyword>
<keyword id="KW-0732">Signal</keyword>
<feature type="signal peptide" evidence="6">
    <location>
        <begin position="1"/>
        <end position="21"/>
    </location>
</feature>
<feature type="chain" id="PRO_5019734915" description="AA9 family lytic polysaccharide monooxygenase A">
    <location>
        <begin position="22"/>
        <end position="328"/>
    </location>
</feature>
<feature type="binding site" evidence="7 10">
    <location>
        <position position="22"/>
    </location>
    <ligand>
        <name>Cu(2+)</name>
        <dbReference type="ChEBI" id="CHEBI:29036"/>
        <note>catalytic</note>
    </ligand>
</feature>
<feature type="binding site" evidence="7 10">
    <location>
        <position position="107"/>
    </location>
    <ligand>
        <name>Cu(2+)</name>
        <dbReference type="ChEBI" id="CHEBI:29036"/>
        <note>catalytic</note>
    </ligand>
</feature>
<feature type="binding site" evidence="2">
    <location>
        <position position="185"/>
    </location>
    <ligand>
        <name>O2</name>
        <dbReference type="ChEBI" id="CHEBI:15379"/>
    </ligand>
</feature>
<feature type="binding site" evidence="2">
    <location>
        <position position="194"/>
    </location>
    <ligand>
        <name>O2</name>
        <dbReference type="ChEBI" id="CHEBI:15379"/>
    </ligand>
</feature>
<feature type="binding site" evidence="7 10">
    <location>
        <position position="196"/>
    </location>
    <ligand>
        <name>Cu(2+)</name>
        <dbReference type="ChEBI" id="CHEBI:29036"/>
        <note>catalytic</note>
    </ligand>
</feature>
<feature type="modified residue" description="Methylhistidine" evidence="5 6">
    <location>
        <position position="22"/>
    </location>
</feature>
<feature type="glycosylation site" description="N-linked (GlcNAc...) asparagine" evidence="7 10">
    <location>
        <position position="80"/>
    </location>
</feature>
<feature type="glycosylation site" description="N-linked (GlcNAc...) asparagine" evidence="4 7 10">
    <location>
        <position position="121"/>
    </location>
</feature>
<feature type="glycosylation site" description="N-linked (GlcNAc...) asparagine" evidence="4 6 7 10">
    <location>
        <position position="159"/>
    </location>
</feature>
<feature type="glycosylation site" description="O-linked (Man...) serine" evidence="7 10">
    <location>
        <position position="235"/>
    </location>
</feature>
<feature type="glycosylation site" description="O-linked (Man...) serine" evidence="7 10">
    <location>
        <position position="237"/>
    </location>
</feature>
<feature type="glycosylation site" description="O-linked (Man...) threonine" evidence="7 10">
    <location>
        <position position="238"/>
    </location>
</feature>
<feature type="glycosylation site" description="O-linked (Man...) threonine" evidence="7 10">
    <location>
        <position position="245"/>
    </location>
</feature>
<feature type="disulfide bond" evidence="7 10">
    <location>
        <begin position="77"/>
        <end position="199"/>
    </location>
</feature>
<feature type="disulfide bond" evidence="7 10">
    <location>
        <begin position="118"/>
        <end position="122"/>
    </location>
</feature>
<feature type="strand" evidence="11">
    <location>
        <begin position="25"/>
        <end position="30"/>
    </location>
</feature>
<feature type="strand" evidence="11">
    <location>
        <begin position="33"/>
        <end position="36"/>
    </location>
</feature>
<feature type="turn" evidence="11">
    <location>
        <begin position="40"/>
        <end position="42"/>
    </location>
</feature>
<feature type="helix" evidence="11">
    <location>
        <begin position="43"/>
        <end position="45"/>
    </location>
</feature>
<feature type="helix" evidence="11">
    <location>
        <begin position="67"/>
        <end position="69"/>
    </location>
</feature>
<feature type="helix" evidence="11">
    <location>
        <begin position="74"/>
        <end position="77"/>
    </location>
</feature>
<feature type="strand" evidence="11">
    <location>
        <begin position="88"/>
        <end position="91"/>
    </location>
</feature>
<feature type="strand" evidence="11">
    <location>
        <begin position="95"/>
        <end position="101"/>
    </location>
</feature>
<feature type="strand" evidence="11">
    <location>
        <begin position="111"/>
        <end position="117"/>
    </location>
</feature>
<feature type="helix" evidence="11">
    <location>
        <begin position="122"/>
        <end position="124"/>
    </location>
</feature>
<feature type="helix" evidence="11">
    <location>
        <begin position="127"/>
        <end position="129"/>
    </location>
</feature>
<feature type="strand" evidence="11">
    <location>
        <begin position="131"/>
        <end position="138"/>
    </location>
</feature>
<feature type="strand" evidence="11">
    <location>
        <begin position="140"/>
        <end position="142"/>
    </location>
</feature>
<feature type="helix" evidence="11">
    <location>
        <begin position="151"/>
        <end position="157"/>
    </location>
</feature>
<feature type="strand" evidence="11">
    <location>
        <begin position="160"/>
        <end position="165"/>
    </location>
</feature>
<feature type="strand" evidence="11">
    <location>
        <begin position="173"/>
        <end position="183"/>
    </location>
</feature>
<feature type="turn" evidence="11">
    <location>
        <begin position="185"/>
        <end position="188"/>
    </location>
</feature>
<feature type="strand" evidence="11">
    <location>
        <begin position="194"/>
        <end position="207"/>
    </location>
</feature>
<feature type="helix" evidence="11">
    <location>
        <begin position="217"/>
        <end position="219"/>
    </location>
</feature>
<feature type="turn" evidence="11">
    <location>
        <begin position="226"/>
        <end position="228"/>
    </location>
</feature>